<proteinExistence type="inferred from homology"/>
<comment type="similarity">
    <text evidence="1">Belongs to the universal ribosomal protein uS2 family.</text>
</comment>
<sequence length="243" mass="27129">MSTNVTMRQMLEAGVHFGHQTRFWNPKMAKYIFGSRNKIHIINLEKTLPLFVEAQEYVRRLAANKGTVMFVGTKRQAREIVREEAARCGMPFVDHRWLGGMLTNYKTVKQSIKRLEEKRAILEGAGETGYNKKELLDLQREVEKLERSLGGIKDMKGLPDAIFVIDTGYQKGTIVEAKKLGIPVIGVVDTNNSPDGIDYVVPGNDDSSRAIRLYARGIADAVLEGRAHSLQEIVAAAETAQAE</sequence>
<gene>
    <name evidence="1" type="primary">rpsB</name>
    <name type="ordered locus">CV_2196</name>
</gene>
<keyword id="KW-1185">Reference proteome</keyword>
<keyword id="KW-0687">Ribonucleoprotein</keyword>
<keyword id="KW-0689">Ribosomal protein</keyword>
<name>RS2_CHRVO</name>
<reference key="1">
    <citation type="journal article" date="2003" name="Proc. Natl. Acad. Sci. U.S.A.">
        <title>The complete genome sequence of Chromobacterium violaceum reveals remarkable and exploitable bacterial adaptability.</title>
        <authorList>
            <person name="Vasconcelos A.T.R."/>
            <person name="de Almeida D.F."/>
            <person name="Hungria M."/>
            <person name="Guimaraes C.T."/>
            <person name="Antonio R.V."/>
            <person name="Almeida F.C."/>
            <person name="de Almeida L.G.P."/>
            <person name="de Almeida R."/>
            <person name="Alves-Gomes J.A."/>
            <person name="Andrade E.M."/>
            <person name="Araripe J."/>
            <person name="de Araujo M.F.F."/>
            <person name="Astolfi-Filho S."/>
            <person name="Azevedo V."/>
            <person name="Baptista A.J."/>
            <person name="Bataus L.A.M."/>
            <person name="Batista J.S."/>
            <person name="Belo A."/>
            <person name="van den Berg C."/>
            <person name="Bogo M."/>
            <person name="Bonatto S."/>
            <person name="Bordignon J."/>
            <person name="Brigido M.M."/>
            <person name="Brito C.A."/>
            <person name="Brocchi M."/>
            <person name="Burity H.A."/>
            <person name="Camargo A.A."/>
            <person name="Cardoso D.D.P."/>
            <person name="Carneiro N.P."/>
            <person name="Carraro D.M."/>
            <person name="Carvalho C.M.B."/>
            <person name="Cascardo J.C.M."/>
            <person name="Cavada B.S."/>
            <person name="Chueire L.M.O."/>
            <person name="Creczynski-Pasa T.B."/>
            <person name="Cunha-Junior N.C."/>
            <person name="Fagundes N."/>
            <person name="Falcao C.L."/>
            <person name="Fantinatti F."/>
            <person name="Farias I.P."/>
            <person name="Felipe M.S.S."/>
            <person name="Ferrari L.P."/>
            <person name="Ferro J.A."/>
            <person name="Ferro M.I.T."/>
            <person name="Franco G.R."/>
            <person name="Freitas N.S.A."/>
            <person name="Furlan L.R."/>
            <person name="Gazzinelli R.T."/>
            <person name="Gomes E.A."/>
            <person name="Goncalves P.R."/>
            <person name="Grangeiro T.B."/>
            <person name="Grattapaglia D."/>
            <person name="Grisard E.C."/>
            <person name="Hanna E.S."/>
            <person name="Jardim S.N."/>
            <person name="Laurino J."/>
            <person name="Leoi L.C.T."/>
            <person name="Lima L.F.A."/>
            <person name="Loureiro M.F."/>
            <person name="Lyra M.C.C.P."/>
            <person name="Madeira H.M.F."/>
            <person name="Manfio G.P."/>
            <person name="Maranhao A.Q."/>
            <person name="Martins W.S."/>
            <person name="di Mauro S.M.Z."/>
            <person name="de Medeiros S.R.B."/>
            <person name="Meissner R.V."/>
            <person name="Moreira M.A.M."/>
            <person name="Nascimento F.F."/>
            <person name="Nicolas M.F."/>
            <person name="Oliveira J.G."/>
            <person name="Oliveira S.C."/>
            <person name="Paixao R.F.C."/>
            <person name="Parente J.A."/>
            <person name="Pedrosa F.O."/>
            <person name="Pena S.D.J."/>
            <person name="Pereira J.O."/>
            <person name="Pereira M."/>
            <person name="Pinto L.S.R.C."/>
            <person name="Pinto L.S."/>
            <person name="Porto J.I.R."/>
            <person name="Potrich D.P."/>
            <person name="Ramalho-Neto C.E."/>
            <person name="Reis A.M.M."/>
            <person name="Rigo L.U."/>
            <person name="Rondinelli E."/>
            <person name="Santos E.B.P."/>
            <person name="Santos F.R."/>
            <person name="Schneider M.P.C."/>
            <person name="Seuanez H.N."/>
            <person name="Silva A.M.R."/>
            <person name="da Silva A.L.C."/>
            <person name="Silva D.W."/>
            <person name="Silva R."/>
            <person name="Simoes I.C."/>
            <person name="Simon D."/>
            <person name="Soares C.M.A."/>
            <person name="Soares R.B.A."/>
            <person name="Souza E.M."/>
            <person name="Souza K.R.L."/>
            <person name="Souza R.C."/>
            <person name="Steffens M.B.R."/>
            <person name="Steindel M."/>
            <person name="Teixeira S.R."/>
            <person name="Urmenyi T."/>
            <person name="Vettore A."/>
            <person name="Wassem R."/>
            <person name="Zaha A."/>
            <person name="Simpson A.J.G."/>
        </authorList>
    </citation>
    <scope>NUCLEOTIDE SEQUENCE [LARGE SCALE GENOMIC DNA]</scope>
    <source>
        <strain>ATCC 12472 / DSM 30191 / JCM 1249 / CCUG 213 / NBRC 12614 / NCIMB 9131 / NCTC 9757 / MK</strain>
    </source>
</reference>
<dbReference type="EMBL" id="AE016825">
    <property type="protein sequence ID" value="AAQ59869.1"/>
    <property type="molecule type" value="Genomic_DNA"/>
</dbReference>
<dbReference type="RefSeq" id="WP_011135744.1">
    <property type="nucleotide sequence ID" value="NC_005085.1"/>
</dbReference>
<dbReference type="SMR" id="Q7NVZ4"/>
<dbReference type="STRING" id="243365.CV_2196"/>
<dbReference type="GeneID" id="66367806"/>
<dbReference type="KEGG" id="cvi:CV_2196"/>
<dbReference type="eggNOG" id="COG0052">
    <property type="taxonomic scope" value="Bacteria"/>
</dbReference>
<dbReference type="HOGENOM" id="CLU_040318_1_2_4"/>
<dbReference type="OrthoDB" id="9808036at2"/>
<dbReference type="Proteomes" id="UP000001424">
    <property type="component" value="Chromosome"/>
</dbReference>
<dbReference type="GO" id="GO:0022627">
    <property type="term" value="C:cytosolic small ribosomal subunit"/>
    <property type="evidence" value="ECO:0007669"/>
    <property type="project" value="TreeGrafter"/>
</dbReference>
<dbReference type="GO" id="GO:0003735">
    <property type="term" value="F:structural constituent of ribosome"/>
    <property type="evidence" value="ECO:0007669"/>
    <property type="project" value="InterPro"/>
</dbReference>
<dbReference type="GO" id="GO:0006412">
    <property type="term" value="P:translation"/>
    <property type="evidence" value="ECO:0007669"/>
    <property type="project" value="UniProtKB-UniRule"/>
</dbReference>
<dbReference type="CDD" id="cd01425">
    <property type="entry name" value="RPS2"/>
    <property type="match status" value="1"/>
</dbReference>
<dbReference type="FunFam" id="1.10.287.610:FF:000004">
    <property type="entry name" value="30S ribosomal protein S2"/>
    <property type="match status" value="1"/>
</dbReference>
<dbReference type="Gene3D" id="3.40.50.10490">
    <property type="entry name" value="Glucose-6-phosphate isomerase like protein, domain 1"/>
    <property type="match status" value="1"/>
</dbReference>
<dbReference type="Gene3D" id="1.10.287.610">
    <property type="entry name" value="Helix hairpin bin"/>
    <property type="match status" value="1"/>
</dbReference>
<dbReference type="HAMAP" id="MF_00291_B">
    <property type="entry name" value="Ribosomal_uS2_B"/>
    <property type="match status" value="1"/>
</dbReference>
<dbReference type="InterPro" id="IPR001865">
    <property type="entry name" value="Ribosomal_uS2"/>
</dbReference>
<dbReference type="InterPro" id="IPR005706">
    <property type="entry name" value="Ribosomal_uS2_bac/mit/plastid"/>
</dbReference>
<dbReference type="InterPro" id="IPR018130">
    <property type="entry name" value="Ribosomal_uS2_CS"/>
</dbReference>
<dbReference type="InterPro" id="IPR023591">
    <property type="entry name" value="Ribosomal_uS2_flav_dom_sf"/>
</dbReference>
<dbReference type="NCBIfam" id="TIGR01011">
    <property type="entry name" value="rpsB_bact"/>
    <property type="match status" value="1"/>
</dbReference>
<dbReference type="PANTHER" id="PTHR12534">
    <property type="entry name" value="30S RIBOSOMAL PROTEIN S2 PROKARYOTIC AND ORGANELLAR"/>
    <property type="match status" value="1"/>
</dbReference>
<dbReference type="PANTHER" id="PTHR12534:SF0">
    <property type="entry name" value="SMALL RIBOSOMAL SUBUNIT PROTEIN US2M"/>
    <property type="match status" value="1"/>
</dbReference>
<dbReference type="Pfam" id="PF00318">
    <property type="entry name" value="Ribosomal_S2"/>
    <property type="match status" value="1"/>
</dbReference>
<dbReference type="PRINTS" id="PR00395">
    <property type="entry name" value="RIBOSOMALS2"/>
</dbReference>
<dbReference type="SUPFAM" id="SSF52313">
    <property type="entry name" value="Ribosomal protein S2"/>
    <property type="match status" value="1"/>
</dbReference>
<dbReference type="PROSITE" id="PS00962">
    <property type="entry name" value="RIBOSOMAL_S2_1"/>
    <property type="match status" value="1"/>
</dbReference>
<protein>
    <recommendedName>
        <fullName evidence="1">Small ribosomal subunit protein uS2</fullName>
    </recommendedName>
    <alternativeName>
        <fullName evidence="2">30S ribosomal protein S2</fullName>
    </alternativeName>
</protein>
<accession>Q7NVZ4</accession>
<organism>
    <name type="scientific">Chromobacterium violaceum (strain ATCC 12472 / DSM 30191 / JCM 1249 / CCUG 213 / NBRC 12614 / NCIMB 9131 / NCTC 9757 / MK)</name>
    <dbReference type="NCBI Taxonomy" id="243365"/>
    <lineage>
        <taxon>Bacteria</taxon>
        <taxon>Pseudomonadati</taxon>
        <taxon>Pseudomonadota</taxon>
        <taxon>Betaproteobacteria</taxon>
        <taxon>Neisseriales</taxon>
        <taxon>Chromobacteriaceae</taxon>
        <taxon>Chromobacterium</taxon>
    </lineage>
</organism>
<evidence type="ECO:0000255" key="1">
    <source>
        <dbReference type="HAMAP-Rule" id="MF_00291"/>
    </source>
</evidence>
<evidence type="ECO:0000305" key="2"/>
<feature type="chain" id="PRO_0000134155" description="Small ribosomal subunit protein uS2">
    <location>
        <begin position="1"/>
        <end position="243"/>
    </location>
</feature>